<name>CR21_LITRO</name>
<reference evidence="5" key="1">
    <citation type="journal article" date="2005" name="Rapid Commun. Mass Spectrom.">
        <title>The rothein peptides from the skin secretion of Roth's tree frog Litoria rothii. Sequence determination using positive and negative ion electrospray mass spectrometry.</title>
        <authorList>
            <person name="Brinkworth C.S."/>
            <person name="Bowie J.H."/>
            <person name="Bilusich D."/>
            <person name="Tyler M.J."/>
        </authorList>
    </citation>
    <scope>PROTEIN SEQUENCE</scope>
    <scope>IDENTIFICATION BY MASS SPECTROMETRY</scope>
    <scope>FUNCTION</scope>
    <scope>SUBCELLULAR LOCATION</scope>
    <scope>TISSUE SPECIFICITY</scope>
    <source>
        <tissue evidence="2">Skin secretion</tissue>
    </source>
</reference>
<reference evidence="5" key="2">
    <citation type="journal article" date="2009" name="Toxicon">
        <title>Activities of seasonably variable caerulein and rothein skin peptides from the tree frogs Litoria splendida and Litoria rothii.</title>
        <authorList>
            <person name="Sherman P.J."/>
            <person name="Jackway R.J."/>
            <person name="Nicholson E."/>
            <person name="Musgrave I.F."/>
            <person name="Boontheung P."/>
            <person name="Bowie J.H."/>
        </authorList>
    </citation>
    <scope>DEVELOPMENTAL STAGE</scope>
</reference>
<organism>
    <name type="scientific">Litoria rothii</name>
    <name type="common">Roth's tree frog</name>
    <name type="synonym">Hyla rothii</name>
    <dbReference type="NCBI Taxonomy" id="336074"/>
    <lineage>
        <taxon>Eukaryota</taxon>
        <taxon>Metazoa</taxon>
        <taxon>Chordata</taxon>
        <taxon>Craniata</taxon>
        <taxon>Vertebrata</taxon>
        <taxon>Euteleostomi</taxon>
        <taxon>Amphibia</taxon>
        <taxon>Batrachia</taxon>
        <taxon>Anura</taxon>
        <taxon>Neobatrachia</taxon>
        <taxon>Hyloidea</taxon>
        <taxon>Hylidae</taxon>
        <taxon>Pelodryadinae</taxon>
        <taxon>Litoria</taxon>
    </lineage>
</organism>
<sequence length="24" mass="2337">GLVSSIGRALGGLLADVVKSKQPA</sequence>
<evidence type="ECO:0000255" key="1"/>
<evidence type="ECO:0000269" key="2">
    <source>
    </source>
</evidence>
<evidence type="ECO:0000269" key="3">
    <source>
    </source>
</evidence>
<evidence type="ECO:0000303" key="4">
    <source>
    </source>
</evidence>
<evidence type="ECO:0000305" key="5"/>
<proteinExistence type="evidence at protein level"/>
<feature type="peptide" id="PRO_0000394432" description="Caerin-2.1" evidence="2">
    <location>
        <begin position="1"/>
        <end position="24"/>
    </location>
</feature>
<accession>P86504</accession>
<protein>
    <recommendedName>
        <fullName evidence="4">Caerin-2.1</fullName>
    </recommendedName>
</protein>
<keyword id="KW-0878">Amphibian defense peptide</keyword>
<keyword id="KW-0903">Direct protein sequencing</keyword>
<keyword id="KW-0964">Secreted</keyword>
<comment type="function">
    <text evidence="2">Inhibits the formation of NO by neuronal nitric oxide synthase.</text>
</comment>
<comment type="subcellular location">
    <subcellularLocation>
        <location evidence="2">Secreted</location>
    </subcellularLocation>
</comment>
<comment type="tissue specificity">
    <text evidence="2">Expressed by the skin dorsal glands.</text>
</comment>
<comment type="developmental stage">
    <text evidence="3">Expressed during summer.</text>
</comment>
<comment type="similarity">
    <text evidence="1">Belongs to the frog skin active peptide (FSAP) family. Caerin subfamily.</text>
</comment>
<dbReference type="GO" id="GO:0005576">
    <property type="term" value="C:extracellular region"/>
    <property type="evidence" value="ECO:0000314"/>
    <property type="project" value="UniProtKB"/>
</dbReference>
<dbReference type="GO" id="GO:0006952">
    <property type="term" value="P:defense response"/>
    <property type="evidence" value="ECO:0007669"/>
    <property type="project" value="UniProtKB-KW"/>
</dbReference>
<dbReference type="GO" id="GO:0051001">
    <property type="term" value="P:negative regulation of nitric-oxide synthase activity"/>
    <property type="evidence" value="ECO:0000314"/>
    <property type="project" value="UniProtKB"/>
</dbReference>
<dbReference type="InterPro" id="IPR032021">
    <property type="entry name" value="Frog_Litoria"/>
</dbReference>
<dbReference type="Pfam" id="PF16049">
    <property type="entry name" value="Antimicrobial24"/>
    <property type="match status" value="1"/>
</dbReference>